<keyword id="KW-0063">Aspartyl esterase</keyword>
<keyword id="KW-0134">Cell wall</keyword>
<keyword id="KW-0961">Cell wall biogenesis/degradation</keyword>
<keyword id="KW-1015">Disulfide bond</keyword>
<keyword id="KW-0325">Glycoprotein</keyword>
<keyword id="KW-0378">Hydrolase</keyword>
<keyword id="KW-1185">Reference proteome</keyword>
<keyword id="KW-0964">Secreted</keyword>
<keyword id="KW-0732">Signal</keyword>
<gene>
    <name type="primary">PME43</name>
    <name type="synonym">ARATH43</name>
    <name type="ordered locus">At4g15980</name>
    <name type="ORF">dl4030c</name>
    <name type="ORF">FCAALL.248</name>
</gene>
<reference key="1">
    <citation type="journal article" date="1998" name="Nature">
        <title>Analysis of 1.9 Mb of contiguous sequence from chromosome 4 of Arabidopsis thaliana.</title>
        <authorList>
            <person name="Bevan M."/>
            <person name="Bancroft I."/>
            <person name="Bent E."/>
            <person name="Love K."/>
            <person name="Goodman H.M."/>
            <person name="Dean C."/>
            <person name="Bergkamp R."/>
            <person name="Dirkse W."/>
            <person name="van Staveren M."/>
            <person name="Stiekema W."/>
            <person name="Drost L."/>
            <person name="Ridley P."/>
            <person name="Hudson S.-A."/>
            <person name="Patel K."/>
            <person name="Murphy G."/>
            <person name="Piffanelli P."/>
            <person name="Wedler H."/>
            <person name="Wedler E."/>
            <person name="Wambutt R."/>
            <person name="Weitzenegger T."/>
            <person name="Pohl T."/>
            <person name="Terryn N."/>
            <person name="Gielen J."/>
            <person name="Villarroel R."/>
            <person name="De Clercq R."/>
            <person name="van Montagu M."/>
            <person name="Lecharny A."/>
            <person name="Aubourg S."/>
            <person name="Gy I."/>
            <person name="Kreis M."/>
            <person name="Lao N."/>
            <person name="Kavanagh T."/>
            <person name="Hempel S."/>
            <person name="Kotter P."/>
            <person name="Entian K.-D."/>
            <person name="Rieger M."/>
            <person name="Schaefer M."/>
            <person name="Funk B."/>
            <person name="Mueller-Auer S."/>
            <person name="Silvey M."/>
            <person name="James R."/>
            <person name="Monfort A."/>
            <person name="Pons A."/>
            <person name="Puigdomenech P."/>
            <person name="Douka A."/>
            <person name="Voukelatou E."/>
            <person name="Milioni D."/>
            <person name="Hatzopoulos P."/>
            <person name="Piravandi E."/>
            <person name="Obermaier B."/>
            <person name="Hilbert H."/>
            <person name="Duesterhoeft A."/>
            <person name="Moores T."/>
            <person name="Jones J.D.G."/>
            <person name="Eneva T."/>
            <person name="Palme K."/>
            <person name="Benes V."/>
            <person name="Rechmann S."/>
            <person name="Ansorge W."/>
            <person name="Cooke R."/>
            <person name="Berger C."/>
            <person name="Delseny M."/>
            <person name="Voet M."/>
            <person name="Volckaert G."/>
            <person name="Mewes H.-W."/>
            <person name="Klosterman S."/>
            <person name="Schueller C."/>
            <person name="Chalwatzis N."/>
        </authorList>
    </citation>
    <scope>NUCLEOTIDE SEQUENCE [LARGE SCALE GENOMIC DNA]</scope>
    <source>
        <strain>cv. Columbia</strain>
    </source>
</reference>
<reference key="2">
    <citation type="journal article" date="1999" name="Nature">
        <title>Sequence and analysis of chromosome 4 of the plant Arabidopsis thaliana.</title>
        <authorList>
            <person name="Mayer K.F.X."/>
            <person name="Schueller C."/>
            <person name="Wambutt R."/>
            <person name="Murphy G."/>
            <person name="Volckaert G."/>
            <person name="Pohl T."/>
            <person name="Duesterhoeft A."/>
            <person name="Stiekema W."/>
            <person name="Entian K.-D."/>
            <person name="Terryn N."/>
            <person name="Harris B."/>
            <person name="Ansorge W."/>
            <person name="Brandt P."/>
            <person name="Grivell L.A."/>
            <person name="Rieger M."/>
            <person name="Weichselgartner M."/>
            <person name="de Simone V."/>
            <person name="Obermaier B."/>
            <person name="Mache R."/>
            <person name="Mueller M."/>
            <person name="Kreis M."/>
            <person name="Delseny M."/>
            <person name="Puigdomenech P."/>
            <person name="Watson M."/>
            <person name="Schmidtheini T."/>
            <person name="Reichert B."/>
            <person name="Portetelle D."/>
            <person name="Perez-Alonso M."/>
            <person name="Boutry M."/>
            <person name="Bancroft I."/>
            <person name="Vos P."/>
            <person name="Hoheisel J."/>
            <person name="Zimmermann W."/>
            <person name="Wedler H."/>
            <person name="Ridley P."/>
            <person name="Langham S.-A."/>
            <person name="McCullagh B."/>
            <person name="Bilham L."/>
            <person name="Robben J."/>
            <person name="van der Schueren J."/>
            <person name="Grymonprez B."/>
            <person name="Chuang Y.-J."/>
            <person name="Vandenbussche F."/>
            <person name="Braeken M."/>
            <person name="Weltjens I."/>
            <person name="Voet M."/>
            <person name="Bastiaens I."/>
            <person name="Aert R."/>
            <person name="Defoor E."/>
            <person name="Weitzenegger T."/>
            <person name="Bothe G."/>
            <person name="Ramsperger U."/>
            <person name="Hilbert H."/>
            <person name="Braun M."/>
            <person name="Holzer E."/>
            <person name="Brandt A."/>
            <person name="Peters S."/>
            <person name="van Staveren M."/>
            <person name="Dirkse W."/>
            <person name="Mooijman P."/>
            <person name="Klein Lankhorst R."/>
            <person name="Rose M."/>
            <person name="Hauf J."/>
            <person name="Koetter P."/>
            <person name="Berneiser S."/>
            <person name="Hempel S."/>
            <person name="Feldpausch M."/>
            <person name="Lamberth S."/>
            <person name="Van den Daele H."/>
            <person name="De Keyser A."/>
            <person name="Buysshaert C."/>
            <person name="Gielen J."/>
            <person name="Villarroel R."/>
            <person name="De Clercq R."/>
            <person name="van Montagu M."/>
            <person name="Rogers J."/>
            <person name="Cronin A."/>
            <person name="Quail M.A."/>
            <person name="Bray-Allen S."/>
            <person name="Clark L."/>
            <person name="Doggett J."/>
            <person name="Hall S."/>
            <person name="Kay M."/>
            <person name="Lennard N."/>
            <person name="McLay K."/>
            <person name="Mayes R."/>
            <person name="Pettett A."/>
            <person name="Rajandream M.A."/>
            <person name="Lyne M."/>
            <person name="Benes V."/>
            <person name="Rechmann S."/>
            <person name="Borkova D."/>
            <person name="Bloecker H."/>
            <person name="Scharfe M."/>
            <person name="Grimm M."/>
            <person name="Loehnert T.-H."/>
            <person name="Dose S."/>
            <person name="de Haan M."/>
            <person name="Maarse A.C."/>
            <person name="Schaefer M."/>
            <person name="Mueller-Auer S."/>
            <person name="Gabel C."/>
            <person name="Fuchs M."/>
            <person name="Fartmann B."/>
            <person name="Granderath K."/>
            <person name="Dauner D."/>
            <person name="Herzl A."/>
            <person name="Neumann S."/>
            <person name="Argiriou A."/>
            <person name="Vitale D."/>
            <person name="Liguori R."/>
            <person name="Piravandi E."/>
            <person name="Massenet O."/>
            <person name="Quigley F."/>
            <person name="Clabauld G."/>
            <person name="Muendlein A."/>
            <person name="Felber R."/>
            <person name="Schnabl S."/>
            <person name="Hiller R."/>
            <person name="Schmidt W."/>
            <person name="Lecharny A."/>
            <person name="Aubourg S."/>
            <person name="Chefdor F."/>
            <person name="Cooke R."/>
            <person name="Berger C."/>
            <person name="Monfort A."/>
            <person name="Casacuberta E."/>
            <person name="Gibbons T."/>
            <person name="Weber N."/>
            <person name="Vandenbol M."/>
            <person name="Bargues M."/>
            <person name="Terol J."/>
            <person name="Torres A."/>
            <person name="Perez-Perez A."/>
            <person name="Purnelle B."/>
            <person name="Bent E."/>
            <person name="Johnson S."/>
            <person name="Tacon D."/>
            <person name="Jesse T."/>
            <person name="Heijnen L."/>
            <person name="Schwarz S."/>
            <person name="Scholler P."/>
            <person name="Heber S."/>
            <person name="Francs P."/>
            <person name="Bielke C."/>
            <person name="Frishman D."/>
            <person name="Haase D."/>
            <person name="Lemcke K."/>
            <person name="Mewes H.-W."/>
            <person name="Stocker S."/>
            <person name="Zaccaria P."/>
            <person name="Bevan M."/>
            <person name="Wilson R.K."/>
            <person name="de la Bastide M."/>
            <person name="Habermann K."/>
            <person name="Parnell L."/>
            <person name="Dedhia N."/>
            <person name="Gnoj L."/>
            <person name="Schutz K."/>
            <person name="Huang E."/>
            <person name="Spiegel L."/>
            <person name="Sekhon M."/>
            <person name="Murray J."/>
            <person name="Sheet P."/>
            <person name="Cordes M."/>
            <person name="Abu-Threideh J."/>
            <person name="Stoneking T."/>
            <person name="Kalicki J."/>
            <person name="Graves T."/>
            <person name="Harmon G."/>
            <person name="Edwards J."/>
            <person name="Latreille P."/>
            <person name="Courtney L."/>
            <person name="Cloud J."/>
            <person name="Abbott A."/>
            <person name="Scott K."/>
            <person name="Johnson D."/>
            <person name="Minx P."/>
            <person name="Bentley D."/>
            <person name="Fulton B."/>
            <person name="Miller N."/>
            <person name="Greco T."/>
            <person name="Kemp K."/>
            <person name="Kramer J."/>
            <person name="Fulton L."/>
            <person name="Mardis E."/>
            <person name="Dante M."/>
            <person name="Pepin K."/>
            <person name="Hillier L.W."/>
            <person name="Nelson J."/>
            <person name="Spieth J."/>
            <person name="Ryan E."/>
            <person name="Andrews S."/>
            <person name="Geisel C."/>
            <person name="Layman D."/>
            <person name="Du H."/>
            <person name="Ali J."/>
            <person name="Berghoff A."/>
            <person name="Jones K."/>
            <person name="Drone K."/>
            <person name="Cotton M."/>
            <person name="Joshu C."/>
            <person name="Antonoiu B."/>
            <person name="Zidanic M."/>
            <person name="Strong C."/>
            <person name="Sun H."/>
            <person name="Lamar B."/>
            <person name="Yordan C."/>
            <person name="Ma P."/>
            <person name="Zhong J."/>
            <person name="Preston R."/>
            <person name="Vil D."/>
            <person name="Shekher M."/>
            <person name="Matero A."/>
            <person name="Shah R."/>
            <person name="Swaby I.K."/>
            <person name="O'Shaughnessy A."/>
            <person name="Rodriguez M."/>
            <person name="Hoffman J."/>
            <person name="Till S."/>
            <person name="Granat S."/>
            <person name="Shohdy N."/>
            <person name="Hasegawa A."/>
            <person name="Hameed A."/>
            <person name="Lodhi M."/>
            <person name="Johnson A."/>
            <person name="Chen E."/>
            <person name="Marra M.A."/>
            <person name="Martienssen R."/>
            <person name="McCombie W.R."/>
        </authorList>
    </citation>
    <scope>NUCLEOTIDE SEQUENCE [LARGE SCALE GENOMIC DNA]</scope>
    <source>
        <strain>cv. Columbia</strain>
    </source>
</reference>
<reference key="3">
    <citation type="journal article" date="2017" name="Plant J.">
        <title>Araport11: a complete reannotation of the Arabidopsis thaliana reference genome.</title>
        <authorList>
            <person name="Cheng C.Y."/>
            <person name="Krishnakumar V."/>
            <person name="Chan A.P."/>
            <person name="Thibaud-Nissen F."/>
            <person name="Schobel S."/>
            <person name="Town C.D."/>
        </authorList>
    </citation>
    <scope>GENOME REANNOTATION</scope>
    <source>
        <strain>cv. Columbia</strain>
    </source>
</reference>
<reference key="4">
    <citation type="journal article" date="2004" name="Carbohydr. Res.">
        <title>Pectin methylesterases: sequence-structural features and phylogenetic relationships.</title>
        <authorList>
            <person name="Markovic O."/>
            <person name="Janecek S."/>
        </authorList>
    </citation>
    <scope>GENE FAMILY</scope>
    <scope>NOMENCLATURE</scope>
</reference>
<reference key="5">
    <citation type="journal article" date="2006" name="Planta">
        <title>Comprehensive expression profiling of the pectin methylesterase gene family during silique development in Arabidopsis thaliana.</title>
        <authorList>
            <person name="Louvet R."/>
            <person name="Cavel E."/>
            <person name="Gutierrez L."/>
            <person name="Guenin S."/>
            <person name="Roger D."/>
            <person name="Gillet F."/>
            <person name="Guerineau F."/>
            <person name="Pelloux J."/>
        </authorList>
    </citation>
    <scope>TISSUE SPECIFICITY</scope>
    <scope>DEVELOPMENTAL STAGE</scope>
</reference>
<name>PME43_ARATH</name>
<evidence type="ECO:0000250" key="1"/>
<evidence type="ECO:0000255" key="2"/>
<evidence type="ECO:0000255" key="3">
    <source>
        <dbReference type="PROSITE-ProRule" id="PRU10040"/>
    </source>
</evidence>
<evidence type="ECO:0000256" key="4">
    <source>
        <dbReference type="SAM" id="MobiDB-lite"/>
    </source>
</evidence>
<evidence type="ECO:0000269" key="5">
    <source>
    </source>
</evidence>
<evidence type="ECO:0000305" key="6"/>
<organism>
    <name type="scientific">Arabidopsis thaliana</name>
    <name type="common">Mouse-ear cress</name>
    <dbReference type="NCBI Taxonomy" id="3702"/>
    <lineage>
        <taxon>Eukaryota</taxon>
        <taxon>Viridiplantae</taxon>
        <taxon>Streptophyta</taxon>
        <taxon>Embryophyta</taxon>
        <taxon>Tracheophyta</taxon>
        <taxon>Spermatophyta</taxon>
        <taxon>Magnoliopsida</taxon>
        <taxon>eudicotyledons</taxon>
        <taxon>Gunneridae</taxon>
        <taxon>Pentapetalae</taxon>
        <taxon>rosids</taxon>
        <taxon>malvids</taxon>
        <taxon>Brassicales</taxon>
        <taxon>Brassicaceae</taxon>
        <taxon>Camelineae</taxon>
        <taxon>Arabidopsis</taxon>
    </lineage>
</organism>
<comment type="function">
    <text evidence="1">Acts in the modification of cell walls via demethylesterification of cell wall pectin.</text>
</comment>
<comment type="catalytic activity">
    <reaction>
        <text>[(1-&gt;4)-alpha-D-galacturonosyl methyl ester](n) + n H2O = [(1-&gt;4)-alpha-D-galacturonosyl](n) + n methanol + n H(+)</text>
        <dbReference type="Rhea" id="RHEA:22380"/>
        <dbReference type="Rhea" id="RHEA-COMP:14570"/>
        <dbReference type="Rhea" id="RHEA-COMP:14573"/>
        <dbReference type="ChEBI" id="CHEBI:15377"/>
        <dbReference type="ChEBI" id="CHEBI:15378"/>
        <dbReference type="ChEBI" id="CHEBI:17790"/>
        <dbReference type="ChEBI" id="CHEBI:140522"/>
        <dbReference type="ChEBI" id="CHEBI:140523"/>
        <dbReference type="EC" id="3.1.1.11"/>
    </reaction>
</comment>
<comment type="pathway">
    <text>Glycan metabolism; pectin degradation; 2-dehydro-3-deoxy-D-gluconate from pectin: step 1/5.</text>
</comment>
<comment type="subcellular location">
    <subcellularLocation>
        <location evidence="1">Secreted</location>
        <location evidence="1">Cell wall</location>
    </subcellularLocation>
</comment>
<comment type="tissue specificity">
    <text evidence="5">Expressed in flower buds.</text>
</comment>
<comment type="miscellaneous">
    <text>The PMEI region may act as an autoinhibitory domain and prevent untimely PME activity during transport.</text>
</comment>
<comment type="similarity">
    <text evidence="6">In the N-terminal section; belongs to the PMEI family.</text>
</comment>
<comment type="similarity">
    <text evidence="6">In the C-terminal section; belongs to the pectinesterase family.</text>
</comment>
<feature type="signal peptide" evidence="2">
    <location>
        <begin position="1"/>
        <end position="22"/>
    </location>
</feature>
<feature type="chain" id="PRO_0000371692" description="Putative pectinesterase/pectinesterase inhibitor 43">
    <location>
        <begin position="23"/>
        <end position="701"/>
    </location>
</feature>
<feature type="region of interest" description="Pectinesterase inhibitor 43">
    <location>
        <begin position="42"/>
        <end position="195"/>
    </location>
</feature>
<feature type="region of interest" description="Disordered" evidence="4">
    <location>
        <begin position="221"/>
        <end position="351"/>
    </location>
</feature>
<feature type="region of interest" description="Pectinesterase 43">
    <location>
        <begin position="391"/>
        <end position="688"/>
    </location>
</feature>
<feature type="compositionally biased region" description="Low complexity" evidence="4">
    <location>
        <begin position="221"/>
        <end position="256"/>
    </location>
</feature>
<feature type="compositionally biased region" description="Low complexity" evidence="4">
    <location>
        <begin position="263"/>
        <end position="275"/>
    </location>
</feature>
<feature type="compositionally biased region" description="Polar residues" evidence="4">
    <location>
        <begin position="276"/>
        <end position="287"/>
    </location>
</feature>
<feature type="compositionally biased region" description="Polar residues" evidence="4">
    <location>
        <begin position="313"/>
        <end position="338"/>
    </location>
</feature>
<feature type="active site" description="Proton donor; for pectinesterase activity" evidence="3">
    <location>
        <position position="520"/>
    </location>
</feature>
<feature type="active site" description="Nucleophile; for pectinesterase activity" evidence="3">
    <location>
        <position position="541"/>
    </location>
</feature>
<feature type="binding site" evidence="1">
    <location>
        <position position="467"/>
    </location>
    <ligand>
        <name>substrate</name>
        <note>for pectinesterase activity</note>
    </ligand>
</feature>
<feature type="binding site" evidence="1">
    <location>
        <position position="497"/>
    </location>
    <ligand>
        <name>substrate</name>
        <note>for pectinesterase activity</note>
    </ligand>
</feature>
<feature type="binding site" evidence="1">
    <location>
        <position position="609"/>
    </location>
    <ligand>
        <name>substrate</name>
        <note>for pectinesterase activity</note>
    </ligand>
</feature>
<feature type="binding site" evidence="1">
    <location>
        <position position="611"/>
    </location>
    <ligand>
        <name>substrate</name>
        <note>for pectinesterase activity</note>
    </ligand>
</feature>
<feature type="site" description="Transition state stabilizer" evidence="1">
    <location>
        <position position="519"/>
    </location>
</feature>
<feature type="glycosylation site" description="N-linked (GlcNAc...) asparagine" evidence="2">
    <location>
        <position position="267"/>
    </location>
</feature>
<feature type="glycosylation site" description="N-linked (GlcNAc...) asparagine" evidence="2">
    <location>
        <position position="637"/>
    </location>
</feature>
<feature type="disulfide bond" evidence="1">
    <location>
        <begin position="534"/>
        <end position="554"/>
    </location>
</feature>
<accession>O23447</accession>
<sequence>MNKYVLLGVTALIMAMVICVEANDGNSPSRKMEEVHRESKLMITKTTVSIICASTDYKQDCTTSLATVRSPDPRNLIRSAFDLAIISIRSGIDRGMIDLKSRADADMHTREALNTCRELMDDAIDDLRKTRDKFRGFLFTRLSDFVEDLCVWLSGSITYQQTCIDGFEGIDSEAAVMMERVMRKGQHLTSNGLAIAANLDKLLKAFRIPFPFLRSRRGRLGILGSGSSRDESVGSSQDSPPNEDSSDDSPSTVDSSENQPVDSSSENQSSDSSNNRPLDSSKNQQMESSEDTPKKSAFSGNQPLDDSSDKLPQKSTSSENQPLDSSENPPQKSTSSENRPLDPLRKLNPLNKLDSLKDRHLSEEGEFPPWVTPHSRRLLARRPRNNGIKANVVVAKDGSGKCKTIAQALAMVPMKNTKKFVIHIKEGVYKEKVEVTKKMLHVMFVGDGPTKTVITGDIAFLPDQVGTYRTASVAVNGDYFMAKDIGFENTAGAARHQAVALRVSADFAVFFNCHMNGYQDTLYVHTHRQFYRNCRVSGTIDFVFGDAKAVFQNCEFVIRRPMEHQQCIVTAQGRKDRRETTGIVIHNSRITGDASYLPVKAKNRAFLGRPWKEFSRTIIMNTEIDDVIDPEGWLKWNETFALNTLFYTEYRNRGRGSGQGRRVRWRGIKRISDRAAREFAPGNFLRGNTWIPQTRIPYNAN</sequence>
<proteinExistence type="evidence at transcript level"/>
<dbReference type="EC" id="3.1.1.11"/>
<dbReference type="EMBL" id="Z97340">
    <property type="protein sequence ID" value="CAB10377.1"/>
    <property type="molecule type" value="Genomic_DNA"/>
</dbReference>
<dbReference type="EMBL" id="AL161542">
    <property type="protein sequence ID" value="CAB78640.1"/>
    <property type="molecule type" value="Genomic_DNA"/>
</dbReference>
<dbReference type="EMBL" id="CP002687">
    <property type="protein sequence ID" value="AEE83677.1"/>
    <property type="molecule type" value="Genomic_DNA"/>
</dbReference>
<dbReference type="PIR" id="G71425">
    <property type="entry name" value="G71425"/>
</dbReference>
<dbReference type="RefSeq" id="NP_193333.1">
    <property type="nucleotide sequence ID" value="NM_117691.2"/>
</dbReference>
<dbReference type="SMR" id="O23447"/>
<dbReference type="FunCoup" id="O23447">
    <property type="interactions" value="20"/>
</dbReference>
<dbReference type="STRING" id="3702.O23447"/>
<dbReference type="GlyCosmos" id="O23447">
    <property type="glycosylation" value="2 sites, No reported glycans"/>
</dbReference>
<dbReference type="GlyGen" id="O23447">
    <property type="glycosylation" value="2 sites"/>
</dbReference>
<dbReference type="PaxDb" id="3702-AT4G15980.1"/>
<dbReference type="ProteomicsDB" id="234743"/>
<dbReference type="EnsemblPlants" id="AT4G15980.1">
    <property type="protein sequence ID" value="AT4G15980.1"/>
    <property type="gene ID" value="AT4G15980"/>
</dbReference>
<dbReference type="GeneID" id="827282"/>
<dbReference type="Gramene" id="AT4G15980.1">
    <property type="protein sequence ID" value="AT4G15980.1"/>
    <property type="gene ID" value="AT4G15980"/>
</dbReference>
<dbReference type="KEGG" id="ath:AT4G15980"/>
<dbReference type="Araport" id="AT4G15980"/>
<dbReference type="TAIR" id="AT4G15980"/>
<dbReference type="eggNOG" id="ENOG502QPZF">
    <property type="taxonomic scope" value="Eukaryota"/>
</dbReference>
<dbReference type="HOGENOM" id="CLU_012243_9_0_1"/>
<dbReference type="InParanoid" id="O23447"/>
<dbReference type="OMA" id="KQECIAS"/>
<dbReference type="PhylomeDB" id="O23447"/>
<dbReference type="BRENDA" id="3.1.1.11">
    <property type="organism ID" value="399"/>
</dbReference>
<dbReference type="UniPathway" id="UPA00545">
    <property type="reaction ID" value="UER00823"/>
</dbReference>
<dbReference type="PRO" id="PR:O23447"/>
<dbReference type="Proteomes" id="UP000006548">
    <property type="component" value="Chromosome 4"/>
</dbReference>
<dbReference type="ExpressionAtlas" id="O23447">
    <property type="expression patterns" value="baseline and differential"/>
</dbReference>
<dbReference type="GO" id="GO:0048046">
    <property type="term" value="C:apoplast"/>
    <property type="evidence" value="ECO:0007005"/>
    <property type="project" value="TAIR"/>
</dbReference>
<dbReference type="GO" id="GO:0004857">
    <property type="term" value="F:enzyme inhibitor activity"/>
    <property type="evidence" value="ECO:0007669"/>
    <property type="project" value="InterPro"/>
</dbReference>
<dbReference type="GO" id="GO:0030599">
    <property type="term" value="F:pectinesterase activity"/>
    <property type="evidence" value="ECO:0007669"/>
    <property type="project" value="UniProtKB-EC"/>
</dbReference>
<dbReference type="GO" id="GO:0042545">
    <property type="term" value="P:cell wall modification"/>
    <property type="evidence" value="ECO:0007669"/>
    <property type="project" value="InterPro"/>
</dbReference>
<dbReference type="GO" id="GO:0045490">
    <property type="term" value="P:pectin catabolic process"/>
    <property type="evidence" value="ECO:0007669"/>
    <property type="project" value="UniProtKB-UniPathway"/>
</dbReference>
<dbReference type="CDD" id="cd15798">
    <property type="entry name" value="PMEI-like_3"/>
    <property type="match status" value="1"/>
</dbReference>
<dbReference type="FunFam" id="1.20.140.40:FF:000047">
    <property type="entry name" value="Pectinesterase"/>
    <property type="match status" value="1"/>
</dbReference>
<dbReference type="FunFam" id="2.160.20.10:FF:000001">
    <property type="entry name" value="Pectinesterase"/>
    <property type="match status" value="1"/>
</dbReference>
<dbReference type="Gene3D" id="1.20.140.40">
    <property type="entry name" value="Invertase/pectin methylesterase inhibitor family protein"/>
    <property type="match status" value="1"/>
</dbReference>
<dbReference type="Gene3D" id="2.160.20.10">
    <property type="entry name" value="Single-stranded right-handed beta-helix, Pectin lyase-like"/>
    <property type="match status" value="1"/>
</dbReference>
<dbReference type="InterPro" id="IPR035513">
    <property type="entry name" value="Invertase/methylesterase_inhib"/>
</dbReference>
<dbReference type="InterPro" id="IPR012334">
    <property type="entry name" value="Pectin_lyas_fold"/>
</dbReference>
<dbReference type="InterPro" id="IPR011050">
    <property type="entry name" value="Pectin_lyase_fold/virulence"/>
</dbReference>
<dbReference type="InterPro" id="IPR033131">
    <property type="entry name" value="Pectinesterase_Asp_AS"/>
</dbReference>
<dbReference type="InterPro" id="IPR000070">
    <property type="entry name" value="Pectinesterase_cat"/>
</dbReference>
<dbReference type="InterPro" id="IPR006501">
    <property type="entry name" value="Pectinesterase_inhib_dom"/>
</dbReference>
<dbReference type="InterPro" id="IPR018040">
    <property type="entry name" value="Pectinesterase_Tyr_AS"/>
</dbReference>
<dbReference type="NCBIfam" id="TIGR01614">
    <property type="entry name" value="PME_inhib"/>
    <property type="match status" value="1"/>
</dbReference>
<dbReference type="PANTHER" id="PTHR31707">
    <property type="entry name" value="PECTINESTERASE"/>
    <property type="match status" value="1"/>
</dbReference>
<dbReference type="Pfam" id="PF01095">
    <property type="entry name" value="Pectinesterase"/>
    <property type="match status" value="1"/>
</dbReference>
<dbReference type="Pfam" id="PF04043">
    <property type="entry name" value="PMEI"/>
    <property type="match status" value="1"/>
</dbReference>
<dbReference type="SMART" id="SM00856">
    <property type="entry name" value="PMEI"/>
    <property type="match status" value="1"/>
</dbReference>
<dbReference type="SUPFAM" id="SSF51126">
    <property type="entry name" value="Pectin lyase-like"/>
    <property type="match status" value="1"/>
</dbReference>
<dbReference type="SUPFAM" id="SSF101148">
    <property type="entry name" value="Plant invertase/pectin methylesterase inhibitor"/>
    <property type="match status" value="1"/>
</dbReference>
<dbReference type="PROSITE" id="PS00800">
    <property type="entry name" value="PECTINESTERASE_1"/>
    <property type="match status" value="1"/>
</dbReference>
<dbReference type="PROSITE" id="PS00503">
    <property type="entry name" value="PECTINESTERASE_2"/>
    <property type="match status" value="1"/>
</dbReference>
<protein>
    <recommendedName>
        <fullName>Putative pectinesterase/pectinesterase inhibitor 43</fullName>
    </recommendedName>
    <domain>
        <recommendedName>
            <fullName>Pectinesterase inhibitor 43</fullName>
        </recommendedName>
        <alternativeName>
            <fullName>Pectin methylesterase inhibitor 43</fullName>
        </alternativeName>
    </domain>
    <domain>
        <recommendedName>
            <fullName>Pectinesterase 43</fullName>
            <shortName>PE 43</shortName>
            <ecNumber>3.1.1.11</ecNumber>
        </recommendedName>
        <alternativeName>
            <fullName>Pectin methylesterase 43</fullName>
            <shortName>AtPME43</shortName>
        </alternativeName>
    </domain>
</protein>